<keyword id="KW-0342">GTP-binding</keyword>
<keyword id="KW-0547">Nucleotide-binding</keyword>
<keyword id="KW-0677">Repeat</keyword>
<keyword id="KW-0690">Ribosome biogenesis</keyword>
<proteinExistence type="inferred from homology"/>
<dbReference type="EMBL" id="CU468230">
    <property type="protein sequence ID" value="CAP02283.1"/>
    <property type="molecule type" value="Genomic_DNA"/>
</dbReference>
<dbReference type="SMR" id="B0VKR4"/>
<dbReference type="KEGG" id="abm:ABSDF2996"/>
<dbReference type="HOGENOM" id="CLU_016077_6_2_6"/>
<dbReference type="Proteomes" id="UP000001741">
    <property type="component" value="Chromosome"/>
</dbReference>
<dbReference type="GO" id="GO:0005525">
    <property type="term" value="F:GTP binding"/>
    <property type="evidence" value="ECO:0007669"/>
    <property type="project" value="UniProtKB-UniRule"/>
</dbReference>
<dbReference type="GO" id="GO:0043022">
    <property type="term" value="F:ribosome binding"/>
    <property type="evidence" value="ECO:0007669"/>
    <property type="project" value="TreeGrafter"/>
</dbReference>
<dbReference type="GO" id="GO:0042254">
    <property type="term" value="P:ribosome biogenesis"/>
    <property type="evidence" value="ECO:0007669"/>
    <property type="project" value="UniProtKB-KW"/>
</dbReference>
<dbReference type="CDD" id="cd01894">
    <property type="entry name" value="EngA1"/>
    <property type="match status" value="1"/>
</dbReference>
<dbReference type="CDD" id="cd01895">
    <property type="entry name" value="EngA2"/>
    <property type="match status" value="1"/>
</dbReference>
<dbReference type="FunFam" id="3.30.300.20:FF:000004">
    <property type="entry name" value="GTPase Der"/>
    <property type="match status" value="1"/>
</dbReference>
<dbReference type="FunFam" id="3.40.50.300:FF:000040">
    <property type="entry name" value="GTPase Der"/>
    <property type="match status" value="1"/>
</dbReference>
<dbReference type="FunFam" id="3.40.50.300:FF:000057">
    <property type="entry name" value="GTPase Der"/>
    <property type="match status" value="1"/>
</dbReference>
<dbReference type="Gene3D" id="3.30.300.20">
    <property type="match status" value="1"/>
</dbReference>
<dbReference type="Gene3D" id="3.40.50.300">
    <property type="entry name" value="P-loop containing nucleotide triphosphate hydrolases"/>
    <property type="match status" value="2"/>
</dbReference>
<dbReference type="HAMAP" id="MF_00195">
    <property type="entry name" value="GTPase_Der"/>
    <property type="match status" value="1"/>
</dbReference>
<dbReference type="InterPro" id="IPR031166">
    <property type="entry name" value="G_ENGA"/>
</dbReference>
<dbReference type="InterPro" id="IPR006073">
    <property type="entry name" value="GTP-bd"/>
</dbReference>
<dbReference type="InterPro" id="IPR016484">
    <property type="entry name" value="GTPase_Der"/>
</dbReference>
<dbReference type="InterPro" id="IPR032859">
    <property type="entry name" value="KH_dom-like"/>
</dbReference>
<dbReference type="InterPro" id="IPR015946">
    <property type="entry name" value="KH_dom-like_a/b"/>
</dbReference>
<dbReference type="InterPro" id="IPR027417">
    <property type="entry name" value="P-loop_NTPase"/>
</dbReference>
<dbReference type="InterPro" id="IPR005225">
    <property type="entry name" value="Small_GTP-bd"/>
</dbReference>
<dbReference type="NCBIfam" id="TIGR03594">
    <property type="entry name" value="GTPase_EngA"/>
    <property type="match status" value="1"/>
</dbReference>
<dbReference type="NCBIfam" id="TIGR00231">
    <property type="entry name" value="small_GTP"/>
    <property type="match status" value="2"/>
</dbReference>
<dbReference type="PANTHER" id="PTHR43834">
    <property type="entry name" value="GTPASE DER"/>
    <property type="match status" value="1"/>
</dbReference>
<dbReference type="PANTHER" id="PTHR43834:SF6">
    <property type="entry name" value="GTPASE DER"/>
    <property type="match status" value="1"/>
</dbReference>
<dbReference type="Pfam" id="PF14714">
    <property type="entry name" value="KH_dom-like"/>
    <property type="match status" value="1"/>
</dbReference>
<dbReference type="Pfam" id="PF01926">
    <property type="entry name" value="MMR_HSR1"/>
    <property type="match status" value="2"/>
</dbReference>
<dbReference type="PIRSF" id="PIRSF006485">
    <property type="entry name" value="GTP-binding_EngA"/>
    <property type="match status" value="1"/>
</dbReference>
<dbReference type="PRINTS" id="PR00326">
    <property type="entry name" value="GTP1OBG"/>
</dbReference>
<dbReference type="SUPFAM" id="SSF52540">
    <property type="entry name" value="P-loop containing nucleoside triphosphate hydrolases"/>
    <property type="match status" value="2"/>
</dbReference>
<dbReference type="PROSITE" id="PS51712">
    <property type="entry name" value="G_ENGA"/>
    <property type="match status" value="2"/>
</dbReference>
<gene>
    <name evidence="1" type="primary">der</name>
    <name type="synonym">engA</name>
    <name type="ordered locus">ABSDF2996</name>
</gene>
<organism>
    <name type="scientific">Acinetobacter baumannii (strain SDF)</name>
    <dbReference type="NCBI Taxonomy" id="509170"/>
    <lineage>
        <taxon>Bacteria</taxon>
        <taxon>Pseudomonadati</taxon>
        <taxon>Pseudomonadota</taxon>
        <taxon>Gammaproteobacteria</taxon>
        <taxon>Moraxellales</taxon>
        <taxon>Moraxellaceae</taxon>
        <taxon>Acinetobacter</taxon>
        <taxon>Acinetobacter calcoaceticus/baumannii complex</taxon>
    </lineage>
</organism>
<name>DER_ACIBS</name>
<feature type="chain" id="PRO_1000124333" description="GTPase Der">
    <location>
        <begin position="1"/>
        <end position="469"/>
    </location>
</feature>
<feature type="domain" description="EngA-type G 1">
    <location>
        <begin position="3"/>
        <end position="166"/>
    </location>
</feature>
<feature type="domain" description="EngA-type G 2">
    <location>
        <begin position="177"/>
        <end position="350"/>
    </location>
</feature>
<feature type="domain" description="KH-like" evidence="1">
    <location>
        <begin position="351"/>
        <end position="435"/>
    </location>
</feature>
<feature type="binding site" evidence="1">
    <location>
        <begin position="9"/>
        <end position="16"/>
    </location>
    <ligand>
        <name>GTP</name>
        <dbReference type="ChEBI" id="CHEBI:37565"/>
        <label>1</label>
    </ligand>
</feature>
<feature type="binding site" evidence="1">
    <location>
        <begin position="56"/>
        <end position="60"/>
    </location>
    <ligand>
        <name>GTP</name>
        <dbReference type="ChEBI" id="CHEBI:37565"/>
        <label>1</label>
    </ligand>
</feature>
<feature type="binding site" evidence="1">
    <location>
        <begin position="118"/>
        <end position="121"/>
    </location>
    <ligand>
        <name>GTP</name>
        <dbReference type="ChEBI" id="CHEBI:37565"/>
        <label>1</label>
    </ligand>
</feature>
<feature type="binding site" evidence="1">
    <location>
        <begin position="183"/>
        <end position="190"/>
    </location>
    <ligand>
        <name>GTP</name>
        <dbReference type="ChEBI" id="CHEBI:37565"/>
        <label>2</label>
    </ligand>
</feature>
<feature type="binding site" evidence="1">
    <location>
        <begin position="230"/>
        <end position="234"/>
    </location>
    <ligand>
        <name>GTP</name>
        <dbReference type="ChEBI" id="CHEBI:37565"/>
        <label>2</label>
    </ligand>
</feature>
<feature type="binding site" evidence="1">
    <location>
        <begin position="295"/>
        <end position="298"/>
    </location>
    <ligand>
        <name>GTP</name>
        <dbReference type="ChEBI" id="CHEBI:37565"/>
        <label>2</label>
    </ligand>
</feature>
<reference key="1">
    <citation type="journal article" date="2008" name="PLoS ONE">
        <title>Comparative analysis of Acinetobacters: three genomes for three lifestyles.</title>
        <authorList>
            <person name="Vallenet D."/>
            <person name="Nordmann P."/>
            <person name="Barbe V."/>
            <person name="Poirel L."/>
            <person name="Mangenot S."/>
            <person name="Bataille E."/>
            <person name="Dossat C."/>
            <person name="Gas S."/>
            <person name="Kreimeyer A."/>
            <person name="Lenoble P."/>
            <person name="Oztas S."/>
            <person name="Poulain J."/>
            <person name="Segurens B."/>
            <person name="Robert C."/>
            <person name="Abergel C."/>
            <person name="Claverie J.-M."/>
            <person name="Raoult D."/>
            <person name="Medigue C."/>
            <person name="Weissenbach J."/>
            <person name="Cruveiller S."/>
        </authorList>
    </citation>
    <scope>NUCLEOTIDE SEQUENCE [LARGE SCALE GENOMIC DNA]</scope>
    <source>
        <strain>SDF</strain>
    </source>
</reference>
<sequence length="469" mass="52781">MKPVIALIGRPNVGKSTLFNQITKSRDALVADFAGLTRDRKYGDATYQNKSFIVVDTGGIGESEGGIDNYMAEQSKTAINEADIIIFVVDARAGLLASDEQIARELRTLGKKIYLVANKVDGVHAEAALVEFYKLGLGEPLQVAASHGRGVQQMLEDVLQDIPEDENPEEHDKDTGLRLAIIGRPNVGKSTLVNRLLGEDRVVAFDQPGTTRDSIYIPFEREGRKYTLIDTAGVRRKGKVDEMIEKFSIVKTLQAMKDAHVVVVVVDAREGIVEQDLHLIGYALEAGRAMVIAINKWDNMSEYDRKQCKLDVERRFDFIPWARIHLISALHGTGVGELYPSIHRAYESANLKVSPAKLTQILNDATDQHQPPTVQGRRIKMRYAHMGGQNPPTIVIHGNKVDKTPADYRRYLENVFRKVYKLEGTPVKIEFKTSENPFEGRKSQVDERTAARRRRYIQKFKKAEKKFKR</sequence>
<accession>B0VKR4</accession>
<comment type="function">
    <text evidence="1">GTPase that plays an essential role in the late steps of ribosome biogenesis.</text>
</comment>
<comment type="subunit">
    <text evidence="1">Associates with the 50S ribosomal subunit.</text>
</comment>
<comment type="similarity">
    <text evidence="1">Belongs to the TRAFAC class TrmE-Era-EngA-EngB-Septin-like GTPase superfamily. EngA (Der) GTPase family.</text>
</comment>
<evidence type="ECO:0000255" key="1">
    <source>
        <dbReference type="HAMAP-Rule" id="MF_00195"/>
    </source>
</evidence>
<protein>
    <recommendedName>
        <fullName evidence="1">GTPase Der</fullName>
    </recommendedName>
    <alternativeName>
        <fullName evidence="1">GTP-binding protein EngA</fullName>
    </alternativeName>
</protein>